<keyword id="KW-0238">DNA-binding</keyword>
<keyword id="KW-0539">Nucleus</keyword>
<keyword id="KW-0677">Repeat</keyword>
<organism>
    <name type="scientific">Trypanosoma brucei rhodesiense</name>
    <dbReference type="NCBI Taxonomy" id="31286"/>
    <lineage>
        <taxon>Eukaryota</taxon>
        <taxon>Discoba</taxon>
        <taxon>Euglenozoa</taxon>
        <taxon>Kinetoplastea</taxon>
        <taxon>Metakinetoplastina</taxon>
        <taxon>Trypanosomatida</taxon>
        <taxon>Trypanosomatidae</taxon>
        <taxon>Trypanosoma</taxon>
    </lineage>
</organism>
<sequence>MATELKKGPLPTDIEETVITIMREEGVRYITAKILRMRLESKYQMEFGPHKAAIDDIVARAMQRPEFKKQLELALKEKDASKSSGGKGSKRARSAGAEAPSKTKKEMTEKPKKPADYPKPAVSSYLLFVADQREELKAKNPGMQNTAILQTLGKMWSDASDDVKEHYRKKAEEDKARFRREVDEYKRQGGKEYGRGGKIKKDSNAPKRAMTSFMFFSSDFRSKHSDLSIVEMSKAAGAAWKELGPEERKVYEEMAEKDKERYKREMAALPK</sequence>
<accession>P26586</accession>
<dbReference type="EMBL" id="M74017">
    <property type="protein sequence ID" value="AAA73081.1"/>
    <property type="molecule type" value="mRNA"/>
</dbReference>
<dbReference type="PIR" id="A45606">
    <property type="entry name" value="A45606"/>
</dbReference>
<dbReference type="SMR" id="P26586"/>
<dbReference type="GO" id="GO:0005634">
    <property type="term" value="C:nucleus"/>
    <property type="evidence" value="ECO:0007669"/>
    <property type="project" value="UniProtKB-SubCell"/>
</dbReference>
<dbReference type="GO" id="GO:0003677">
    <property type="term" value="F:DNA binding"/>
    <property type="evidence" value="ECO:0007669"/>
    <property type="project" value="UniProtKB-KW"/>
</dbReference>
<dbReference type="Gene3D" id="1.10.30.10">
    <property type="entry name" value="High mobility group box domain"/>
    <property type="match status" value="2"/>
</dbReference>
<dbReference type="InterPro" id="IPR014876">
    <property type="entry name" value="DEK_C"/>
</dbReference>
<dbReference type="InterPro" id="IPR009071">
    <property type="entry name" value="HMG_box_dom"/>
</dbReference>
<dbReference type="InterPro" id="IPR036910">
    <property type="entry name" value="HMG_box_dom_sf"/>
</dbReference>
<dbReference type="InterPro" id="IPR050342">
    <property type="entry name" value="HMGB"/>
</dbReference>
<dbReference type="PANTHER" id="PTHR48112">
    <property type="entry name" value="HIGH MOBILITY GROUP PROTEIN DSP1"/>
    <property type="match status" value="1"/>
</dbReference>
<dbReference type="PANTHER" id="PTHR48112:SF22">
    <property type="entry name" value="MITOCHONDRIAL TRANSCRIPTION FACTOR A, ISOFORM B"/>
    <property type="match status" value="1"/>
</dbReference>
<dbReference type="Pfam" id="PF08766">
    <property type="entry name" value="DEK_C"/>
    <property type="match status" value="1"/>
</dbReference>
<dbReference type="Pfam" id="PF00505">
    <property type="entry name" value="HMG_box"/>
    <property type="match status" value="2"/>
</dbReference>
<dbReference type="PRINTS" id="PR00886">
    <property type="entry name" value="HIGHMOBLTY12"/>
</dbReference>
<dbReference type="SMART" id="SM00398">
    <property type="entry name" value="HMG"/>
    <property type="match status" value="2"/>
</dbReference>
<dbReference type="SUPFAM" id="SSF47095">
    <property type="entry name" value="HMG-box"/>
    <property type="match status" value="2"/>
</dbReference>
<dbReference type="PROSITE" id="PS51998">
    <property type="entry name" value="DEK_C"/>
    <property type="match status" value="1"/>
</dbReference>
<dbReference type="PROSITE" id="PS50118">
    <property type="entry name" value="HMG_BOX_2"/>
    <property type="match status" value="2"/>
</dbReference>
<reference key="1">
    <citation type="journal article" date="1992" name="Mol. Biochem. Parasitol.">
        <title>Differential expression of two mRNAs from a single gene encoding an HMG1-like DNA binding protein of African trypanosomes.</title>
        <authorList>
            <person name="Erondu N.E."/>
            <person name="Donelson J.E."/>
        </authorList>
    </citation>
    <scope>NUCLEOTIDE SEQUENCE [MRNA]</scope>
    <source>
        <strain>WRATat 1.1</strain>
    </source>
</reference>
<evidence type="ECO:0000255" key="1">
    <source>
        <dbReference type="PROSITE-ProRule" id="PRU00267"/>
    </source>
</evidence>
<evidence type="ECO:0000255" key="2">
    <source>
        <dbReference type="PROSITE-ProRule" id="PRU01342"/>
    </source>
</evidence>
<evidence type="ECO:0000256" key="3">
    <source>
        <dbReference type="SAM" id="MobiDB-lite"/>
    </source>
</evidence>
<name>HMGL_TRYBR</name>
<comment type="function">
    <text>Unknown. May play a role in transcription and/or DNA replication. It is not known whether this protein is DNA sequence binding-specific or not.</text>
</comment>
<comment type="subcellular location">
    <subcellularLocation>
        <location evidence="1">Nucleus</location>
    </subcellularLocation>
</comment>
<protein>
    <recommendedName>
        <fullName>High mobility group protein homolog TDP-1</fullName>
    </recommendedName>
</protein>
<feature type="chain" id="PRO_0000048563" description="High mobility group protein homolog TDP-1">
    <location>
        <begin position="1"/>
        <end position="271"/>
    </location>
</feature>
<feature type="domain" description="DEK-C" evidence="2">
    <location>
        <begin position="8"/>
        <end position="63"/>
    </location>
</feature>
<feature type="DNA-binding region" description="HMG box 1" evidence="1">
    <location>
        <begin position="118"/>
        <end position="186"/>
    </location>
</feature>
<feature type="DNA-binding region" description="HMG box 2" evidence="1">
    <location>
        <begin position="206"/>
        <end position="270"/>
    </location>
</feature>
<feature type="region of interest" description="Disordered" evidence="3">
    <location>
        <begin position="75"/>
        <end position="118"/>
    </location>
</feature>
<feature type="compositionally biased region" description="Basic and acidic residues" evidence="3">
    <location>
        <begin position="101"/>
        <end position="116"/>
    </location>
</feature>
<proteinExistence type="evidence at transcript level"/>